<organism>
    <name type="scientific">Bos taurus</name>
    <name type="common">Bovine</name>
    <dbReference type="NCBI Taxonomy" id="9913"/>
    <lineage>
        <taxon>Eukaryota</taxon>
        <taxon>Metazoa</taxon>
        <taxon>Chordata</taxon>
        <taxon>Craniata</taxon>
        <taxon>Vertebrata</taxon>
        <taxon>Euteleostomi</taxon>
        <taxon>Mammalia</taxon>
        <taxon>Eutheria</taxon>
        <taxon>Laurasiatheria</taxon>
        <taxon>Artiodactyla</taxon>
        <taxon>Ruminantia</taxon>
        <taxon>Pecora</taxon>
        <taxon>Bovidae</taxon>
        <taxon>Bovinae</taxon>
        <taxon>Bos</taxon>
    </lineage>
</organism>
<dbReference type="EMBL" id="BC112736">
    <property type="protein sequence ID" value="AAI12737.1"/>
    <property type="molecule type" value="mRNA"/>
</dbReference>
<dbReference type="RefSeq" id="NP_001039768.1">
    <property type="nucleotide sequence ID" value="NM_001046303.1"/>
</dbReference>
<dbReference type="RefSeq" id="XP_005209518.1">
    <property type="nucleotide sequence ID" value="XM_005209461.5"/>
</dbReference>
<dbReference type="RefSeq" id="XP_015327739.1">
    <property type="nucleotide sequence ID" value="XM_015472253.3"/>
</dbReference>
<dbReference type="RefSeq" id="XP_015327740.1">
    <property type="nucleotide sequence ID" value="XM_015472254.3"/>
</dbReference>
<dbReference type="SMR" id="Q2KI80"/>
<dbReference type="FunCoup" id="Q2KI80">
    <property type="interactions" value="887"/>
</dbReference>
<dbReference type="STRING" id="9913.ENSBTAP00000023093"/>
<dbReference type="PaxDb" id="9913-ENSBTAP00000023093"/>
<dbReference type="Ensembl" id="ENSBTAT00000023093.4">
    <property type="protein sequence ID" value="ENSBTAP00000023093.3"/>
    <property type="gene ID" value="ENSBTAG00000017371.5"/>
</dbReference>
<dbReference type="GeneID" id="529327"/>
<dbReference type="KEGG" id="bta:529327"/>
<dbReference type="CTD" id="285613"/>
<dbReference type="VEuPathDB" id="HostDB:ENSBTAG00000017371"/>
<dbReference type="VGNC" id="VGNC:33861">
    <property type="gene designation" value="RELL2"/>
</dbReference>
<dbReference type="eggNOG" id="ENOG502RZW4">
    <property type="taxonomic scope" value="Eukaryota"/>
</dbReference>
<dbReference type="GeneTree" id="ENSGT00940000160541"/>
<dbReference type="HOGENOM" id="CLU_074130_0_0_1"/>
<dbReference type="InParanoid" id="Q2KI80"/>
<dbReference type="OMA" id="IPCAHEG"/>
<dbReference type="OrthoDB" id="9353106at2759"/>
<dbReference type="TreeFam" id="TF332339"/>
<dbReference type="Proteomes" id="UP000009136">
    <property type="component" value="Chromosome 7"/>
</dbReference>
<dbReference type="Bgee" id="ENSBTAG00000017371">
    <property type="expression patterns" value="Expressed in retina and 99 other cell types or tissues"/>
</dbReference>
<dbReference type="GO" id="GO:0005886">
    <property type="term" value="C:plasma membrane"/>
    <property type="evidence" value="ECO:0007669"/>
    <property type="project" value="UniProtKB-SubCell"/>
</dbReference>
<dbReference type="GO" id="GO:0010811">
    <property type="term" value="P:positive regulation of cell-substrate adhesion"/>
    <property type="evidence" value="ECO:0000318"/>
    <property type="project" value="GO_Central"/>
</dbReference>
<dbReference type="GO" id="GO:1900745">
    <property type="term" value="P:positive regulation of p38MAPK cascade"/>
    <property type="evidence" value="ECO:0000250"/>
    <property type="project" value="UniProtKB"/>
</dbReference>
<dbReference type="InterPro" id="IPR042313">
    <property type="entry name" value="RELL2"/>
</dbReference>
<dbReference type="InterPro" id="IPR022248">
    <property type="entry name" value="TNF_rcpt_RELT"/>
</dbReference>
<dbReference type="PANTHER" id="PTHR31481:SF0">
    <property type="entry name" value="RELT-LIKE PROTEIN 2"/>
    <property type="match status" value="1"/>
</dbReference>
<dbReference type="PANTHER" id="PTHR31481">
    <property type="entry name" value="RELT-LIKE PROTEIN 2 RELL2"/>
    <property type="match status" value="1"/>
</dbReference>
<dbReference type="Pfam" id="PF12606">
    <property type="entry name" value="RELT"/>
    <property type="match status" value="1"/>
</dbReference>
<gene>
    <name type="primary">RELL2</name>
</gene>
<keyword id="KW-1003">Cell membrane</keyword>
<keyword id="KW-0472">Membrane</keyword>
<keyword id="KW-0597">Phosphoprotein</keyword>
<keyword id="KW-1185">Reference proteome</keyword>
<keyword id="KW-0812">Transmembrane</keyword>
<keyword id="KW-1133">Transmembrane helix</keyword>
<reference key="1">
    <citation type="submission" date="2006-01" db="EMBL/GenBank/DDBJ databases">
        <authorList>
            <consortium name="NIH - Mammalian Gene Collection (MGC) project"/>
        </authorList>
    </citation>
    <scope>NUCLEOTIDE SEQUENCE [LARGE SCALE MRNA]</scope>
    <source>
        <strain>Hereford</strain>
        <tissue>Kidney</tissue>
    </source>
</reference>
<accession>Q2KI80</accession>
<proteinExistence type="evidence at transcript level"/>
<evidence type="ECO:0000250" key="1">
    <source>
        <dbReference type="UniProtKB" id="Q8BRJ3"/>
    </source>
</evidence>
<evidence type="ECO:0000250" key="2">
    <source>
        <dbReference type="UniProtKB" id="Q8NC24"/>
    </source>
</evidence>
<evidence type="ECO:0000255" key="3"/>
<evidence type="ECO:0000256" key="4">
    <source>
        <dbReference type="SAM" id="MobiDB-lite"/>
    </source>
</evidence>
<evidence type="ECO:0000305" key="5"/>
<feature type="chain" id="PRO_0000249844" description="RELT-like protein 2">
    <location>
        <begin position="1"/>
        <end position="303"/>
    </location>
</feature>
<feature type="transmembrane region" description="Helical" evidence="3">
    <location>
        <begin position="15"/>
        <end position="35"/>
    </location>
</feature>
<feature type="region of interest" description="Disordered" evidence="4">
    <location>
        <begin position="46"/>
        <end position="67"/>
    </location>
</feature>
<feature type="region of interest" description="Disordered" evidence="4">
    <location>
        <begin position="111"/>
        <end position="303"/>
    </location>
</feature>
<feature type="compositionally biased region" description="Basic and acidic residues" evidence="4">
    <location>
        <begin position="148"/>
        <end position="158"/>
    </location>
</feature>
<feature type="compositionally biased region" description="Basic and acidic residues" evidence="4">
    <location>
        <begin position="172"/>
        <end position="188"/>
    </location>
</feature>
<feature type="compositionally biased region" description="Gly residues" evidence="4">
    <location>
        <begin position="194"/>
        <end position="212"/>
    </location>
</feature>
<feature type="modified residue" description="Phosphoserine" evidence="1">
    <location>
        <position position="52"/>
    </location>
</feature>
<protein>
    <recommendedName>
        <fullName>RELT-like protein 2</fullName>
    </recommendedName>
</protein>
<sequence length="303" mass="32269">MSEPQPDLEPPQHGLYMLFLLVLVFFLMGLVGFMICHVLKKKGYRCRTSRGSEPDDAQLQPPEDDDMNEDTVERIVRCIIQNEANAEALKEMLGDSEGEGTVQLSSVDATSSLQDGAPSHHHTVHLGSSAPCIHCSRNKRPPLVRQGRSKEGKSRPRPGETTVFSVGRFRVTHIEKRYGLHEHRDGSPTDRSWGSGGGQDPGGGQGPGGGQPRTGMPAIESLPPERPQPPALASTPMQNGGLRDSSRVPRALEGNPGASAEPMLGAGGRGPSPGPARKEANGQPSKQDTSDHQVSPPRGAGGV</sequence>
<name>RELL2_BOVIN</name>
<comment type="function">
    <text evidence="2">Induces activation of MAPK14/p38 cascade, when overexpressed. Induces apoptosis, when overexpressed.</text>
</comment>
<comment type="subunit">
    <text evidence="2">Interacts with RELT, RELL1, OXSR1, PLSCR1 and TRAF2.</text>
</comment>
<comment type="subcellular location">
    <subcellularLocation>
        <location evidence="2">Cell membrane</location>
        <topology evidence="2">Single-pass membrane protein</topology>
    </subcellularLocation>
</comment>
<comment type="similarity">
    <text evidence="5">Belongs to the RELT family.</text>
</comment>